<protein>
    <recommendedName>
        <fullName>Tumor necrosis factor receptor superfamily member 1A</fullName>
    </recommendedName>
    <alternativeName>
        <fullName>Tumor necrosis factor receptor 1</fullName>
        <shortName>TNF-R1</shortName>
    </alternativeName>
    <alternativeName>
        <fullName>Tumor necrosis factor receptor type I</fullName>
        <shortName>TNF-RI</shortName>
        <shortName>TNFR-I</shortName>
    </alternativeName>
    <alternativeName>
        <fullName>p55</fullName>
    </alternativeName>
    <alternativeName>
        <fullName>p60</fullName>
    </alternativeName>
    <cdAntigenName>CD120a</cdAntigenName>
    <component>
        <recommendedName>
            <fullName>Tumor necrosis factor receptor superfamily member 1A, membrane form</fullName>
        </recommendedName>
    </component>
    <component>
        <recommendedName>
            <fullName>Tumor necrosis factor-binding protein 1</fullName>
            <shortName>TBPI</shortName>
        </recommendedName>
    </component>
</protein>
<evidence type="ECO:0000250" key="1"/>
<evidence type="ECO:0000250" key="2">
    <source>
        <dbReference type="UniProtKB" id="P25118"/>
    </source>
</evidence>
<evidence type="ECO:0000255" key="3"/>
<evidence type="ECO:0000255" key="4">
    <source>
        <dbReference type="PROSITE-ProRule" id="PRU00064"/>
    </source>
</evidence>
<evidence type="ECO:0000256" key="5">
    <source>
        <dbReference type="SAM" id="MobiDB-lite"/>
    </source>
</evidence>
<evidence type="ECO:0000269" key="6">
    <source>
    </source>
</evidence>
<evidence type="ECO:0000269" key="7">
    <source>
    </source>
</evidence>
<evidence type="ECO:0000269" key="8">
    <source>
    </source>
</evidence>
<evidence type="ECO:0000269" key="9">
    <source>
    </source>
</evidence>
<evidence type="ECO:0000269" key="10">
    <source>
    </source>
</evidence>
<evidence type="ECO:0000269" key="11">
    <source>
    </source>
</evidence>
<evidence type="ECO:0000269" key="12">
    <source>
    </source>
</evidence>
<evidence type="ECO:0000269" key="13">
    <source>
    </source>
</evidence>
<evidence type="ECO:0000269" key="14">
    <source>
    </source>
</evidence>
<evidence type="ECO:0000269" key="15">
    <source>
    </source>
</evidence>
<evidence type="ECO:0000269" key="16">
    <source>
    </source>
</evidence>
<evidence type="ECO:0000269" key="17">
    <source>
    </source>
</evidence>
<evidence type="ECO:0000269" key="18">
    <source>
    </source>
</evidence>
<evidence type="ECO:0000269" key="19">
    <source>
    </source>
</evidence>
<evidence type="ECO:0000269" key="20">
    <source>
    </source>
</evidence>
<evidence type="ECO:0000269" key="21">
    <source>
    </source>
</evidence>
<evidence type="ECO:0000269" key="22">
    <source>
    </source>
</evidence>
<evidence type="ECO:0000269" key="23">
    <source>
    </source>
</evidence>
<evidence type="ECO:0000269" key="24">
    <source>
    </source>
</evidence>
<evidence type="ECO:0000269" key="25">
    <source>
    </source>
</evidence>
<evidence type="ECO:0000269" key="26">
    <source>
    </source>
</evidence>
<evidence type="ECO:0000269" key="27">
    <source>
    </source>
</evidence>
<evidence type="ECO:0000269" key="28">
    <source>
    </source>
</evidence>
<evidence type="ECO:0000269" key="29">
    <source ref="7"/>
</evidence>
<evidence type="ECO:0000303" key="30">
    <source>
    </source>
</evidence>
<evidence type="ECO:0000303" key="31">
    <source>
    </source>
</evidence>
<evidence type="ECO:0000305" key="32"/>
<evidence type="ECO:0000305" key="33">
    <source>
    </source>
</evidence>
<evidence type="ECO:0007829" key="34">
    <source>
        <dbReference type="PDB" id="1EXT"/>
    </source>
</evidence>
<evidence type="ECO:0007829" key="35">
    <source>
        <dbReference type="PDB" id="1FT4"/>
    </source>
</evidence>
<evidence type="ECO:0007829" key="36">
    <source>
        <dbReference type="PDB" id="1ICH"/>
    </source>
</evidence>
<evidence type="ECO:0007829" key="37">
    <source>
        <dbReference type="PDB" id="1TNR"/>
    </source>
</evidence>
<evidence type="ECO:0007829" key="38">
    <source>
        <dbReference type="PDB" id="7K7A"/>
    </source>
</evidence>
<evidence type="ECO:0007829" key="39">
    <source>
        <dbReference type="PDB" id="7KP8"/>
    </source>
</evidence>
<evidence type="ECO:0007829" key="40">
    <source>
        <dbReference type="PDB" id="8P6Q"/>
    </source>
</evidence>
<comment type="function">
    <text>Receptor for TNFSF2/TNF-alpha and homotrimeric TNFSF1/lymphotoxin-alpha. The adapter molecule FADD recruits caspase-8 to the activated receptor. The resulting death-inducing signaling complex (DISC) performs caspase-8 proteolytic activation which initiates the subsequent cascade of caspases (aspartate-specific cysteine proteases) mediating apoptosis. Contributes to the induction of non-cytocidal TNF effects including anti-viral state and activation of the acid sphingomyelinase.</text>
</comment>
<comment type="subunit">
    <text evidence="2 7 8 9 15 20 21 25 26 28">Binding of TNF to the extracellular domain leads to homotrimerization. The aggregated death domains provide a novel molecular interface that interacts specifically with the death domain of TRADD. Various TRADD-interacting proteins such as TRAFS, RIPK1 and possibly FADD, are recruited to the complex by their association with TRADD. This complex activates at least two distinct signaling cascades, apoptosis and NF-kappa-B signaling. Interacts with BAG4, BABAM2, FEM1B, GRB2, SQSTM1 and TRPC4AP (PubMed:10356400, PubMed:10359574, PubMed:10542291, PubMed:15465831, PubMed:8387891, PubMed:9915703). Interacts directly with NOL3 (via CARD domain); inhibits TNF-signaling pathway (By similarity). Interacts with SH3RF2, TRADD and RIPK1. SH3RF2 facilitates the recruitment of RIPK1 and TRADD to TNFRSF1A in a TNF-alpha-dependent process (PubMed:24130170). Interacts with PGLYRP1; this interaction is important for cell death induction (PubMed:26183779). Interacts (via death domain) with MADD (via death domain) (PubMed:9115275).</text>
</comment>
<comment type="subunit">
    <text evidence="22">(Microbial infection) Interacts with mumps virus protein SH; this interaction inhibits downstream NF-kappa-B pathway activation.</text>
</comment>
<comment type="subunit">
    <text evidence="27">(Microbial infection) Interacts with HCV core protein.</text>
</comment>
<comment type="subunit">
    <text evidence="18">(Microbial infection) Interacts with human cytomegalovirus/HHV-5 protein UL138.</text>
</comment>
<comment type="subunit">
    <text evidence="14 16">(Microbial infection) Interacts with host TNFRSF1A; this interaction leads to the stimulation of both surface expression and shedding of TNFRSF1A.</text>
</comment>
<comment type="interaction">
    <interactant intactId="EBI-299451">
        <id>P19438</id>
    </interactant>
    <interactant intactId="EBI-747754">
        <id>P28799</id>
        <label>GRN</label>
    </interactant>
    <organismsDiffer>false</organismsDiffer>
    <experiments>4</experiments>
</comment>
<comment type="interaction">
    <interactant intactId="EBI-299451">
        <id>P19438</id>
    </interactant>
    <interactant intactId="EBI-716872">
        <id>Q969G6</id>
        <label>RFK</label>
    </interactant>
    <organismsDiffer>false</organismsDiffer>
    <experiments>4</experiments>
</comment>
<comment type="interaction">
    <interactant intactId="EBI-299451">
        <id>P19438</id>
    </interactant>
    <interactant intactId="EBI-358507">
        <id>Q13546</id>
        <label>RIPK1</label>
    </interactant>
    <organismsDiffer>false</organismsDiffer>
    <experiments>7</experiments>
</comment>
<comment type="interaction">
    <interactant intactId="EBI-299451">
        <id>P19438</id>
    </interactant>
    <interactant intactId="EBI-359977">
        <id>P01375</id>
        <label>TNF</label>
    </interactant>
    <organismsDiffer>false</organismsDiffer>
    <experiments>16</experiments>
</comment>
<comment type="interaction">
    <interactant intactId="EBI-299451">
        <id>P19438</id>
    </interactant>
    <interactant intactId="EBI-359215">
        <id>Q15628</id>
        <label>TRADD</label>
    </interactant>
    <organismsDiffer>false</organismsDiffer>
    <experiments>14</experiments>
</comment>
<comment type="interaction">
    <interactant intactId="EBI-15795644">
        <id>P19438-1</id>
    </interactant>
    <interactant intactId="EBI-716872">
        <id>Q969G6</id>
        <label>RFK</label>
    </interactant>
    <organismsDiffer>false</organismsDiffer>
    <experiments>2</experiments>
</comment>
<comment type="subcellular location">
    <subcellularLocation>
        <location evidence="19">Cell membrane</location>
        <topology evidence="19">Single-pass type I membrane protein</topology>
    </subcellularLocation>
    <subcellularLocation>
        <location evidence="19">Golgi apparatus membrane</location>
        <topology evidence="19">Single-pass type I membrane protein</topology>
    </subcellularLocation>
    <subcellularLocation>
        <location evidence="19">Secreted</location>
    </subcellularLocation>
    <text>A secreted form is produced through proteolytic processing.</text>
</comment>
<comment type="subcellular location">
    <molecule>Isoform 4</molecule>
    <subcellularLocation>
        <location>Secreted</location>
    </subcellularLocation>
    <text>Lacks a Golgi-retention motif, is not membrane bound and therefore is secreted.</text>
</comment>
<comment type="alternative products">
    <event type="alternative splicing"/>
    <isoform>
        <id>P19438-1</id>
        <name>1</name>
        <name>FL-TNFR1</name>
        <sequence type="displayed"/>
    </isoform>
    <isoform>
        <id>P19438-2</id>
        <name>2</name>
        <sequence type="described" ref="VSP_037153"/>
    </isoform>
    <isoform>
        <id>P19438-4</id>
        <name>4</name>
        <name>Delta6-TNFR1</name>
        <sequence type="described" ref="VSP_044949"/>
    </isoform>
    <isoform>
        <id>P19438-3</id>
        <name>3</name>
        <sequence type="described" ref="VSP_037154"/>
    </isoform>
    <isoform>
        <id>P19438-5</id>
        <name>5</name>
        <sequence type="described" ref="VSP_047613 VSP_047614"/>
    </isoform>
</comment>
<comment type="domain">
    <text>The domain that induces A-SMASE is probably identical to the death domain. The N-SMASE activation domain (NSD) is both necessary and sufficient for activation of N-SMASE.</text>
</comment>
<comment type="domain">
    <text evidence="1">Both the cytoplasmic membrane-proximal region and the C-terminal region containing the death domain are involved in the interaction with TRPC4AP.</text>
</comment>
<comment type="PTM">
    <text>The soluble form is produced from the membrane form by proteolytic processing.</text>
</comment>
<comment type="PTM">
    <text evidence="24 33">(Microbial infection) Glycosylated at Arg-376 by enteropathogenic E.coli protein NleB1 and S.typhimurium protein Ssek3: arginine GlcNAcylation prevents homotypic/heterotypic death domain interactions.</text>
</comment>
<comment type="disease" evidence="6 10 11 12 13">
    <disease id="DI-00491">
        <name>Periodic fever, familial, autosomal dominant</name>
        <acronym>FPF</acronym>
        <description>A hereditary periodic fever syndrome characterized by recurrent fever, abdominal pain, localized tender skin lesions and myalgia. Reactive amyloidosis is the main complication and occurs in 25% of cases.</description>
        <dbReference type="MIM" id="142680"/>
    </disease>
    <text>The disease is caused by variants affecting the gene represented in this entry.</text>
</comment>
<comment type="disease" evidence="19">
    <disease id="DI-03521">
        <name>Multiple sclerosis 5</name>
        <acronym>MS5</acronym>
        <description>A multifactorial, inflammatory, demyelinating disease of the central nervous system. Sclerotic lesions are characterized by perivascular infiltration of monocytes and lymphocytes and appear as indurated areas in pathologic specimens (sclerosis in plaques). The pathological mechanism is regarded as an autoimmune attack of the myelin sheath, mediated by both cellular and humoral immunity. Clinical manifestations include visual loss, extra-ocular movement disorders, paresthesias, loss of sensation, weakness, dysarthria, spasticity, ataxia and bladder dysfunction. Genetic and environmental factors influence susceptibility to the disease.</description>
        <dbReference type="MIM" id="614810"/>
    </disease>
    <text>Disease susceptibility is associated with variants affecting the gene represented in this entry. An intronic mutation affecting alternative splicing and skipping of exon 6 directs increased expression of isoform 4 a transcript encoding a C-terminally truncated protein which is secreted and may function as a TNF antagonist.</text>
</comment>
<comment type="miscellaneous">
    <molecule>Isoform 4</molecule>
    <text evidence="32">Disease-associated isoform. Isoform 4 splicing pattern is driven by a variation in the exon 6/intron 6 boundary region that alters exon 6 splicing. Exon 6 skipping introduces a frameshift and the translation of a protein lacking the intracellular, the transmembrane and part of the extracellular domain.</text>
</comment>
<comment type="online information" name="INFEVERS">
    <link uri="https://infevers.umai-montpellier.fr/web/search.php?n=22"/>
    <text>Repertory of FMF and hereditary autoinflammatory disorders mutations</text>
</comment>
<reference key="1">
    <citation type="journal article" date="1990" name="Cell">
        <title>Molecular cloning and expression of the human 55 kd tumor necrosis factor receptor.</title>
        <authorList>
            <person name="Loetscher H."/>
            <person name="Pan Y.-C.E."/>
            <person name="Lahm H.-W."/>
            <person name="Gentz R."/>
            <person name="Brockhaus M."/>
            <person name="Tabuchi H."/>
            <person name="Lesslauer W."/>
        </authorList>
    </citation>
    <scope>NUCLEOTIDE SEQUENCE [MRNA] (ISOFORM 1)</scope>
    <scope>PROTEIN SEQUENCE OF 30-57 AND 252-264</scope>
</reference>
<reference key="2">
    <citation type="journal article" date="1990" name="Cell">
        <title>Molecular cloning and expression of a receptor for human tumor necrosis factor.</title>
        <authorList>
            <person name="Schall T.J."/>
            <person name="Lewis M."/>
            <person name="Koller K.J."/>
            <person name="Lee A."/>
            <person name="Rice G.C."/>
            <person name="Wong G.H.W."/>
            <person name="Getanaga T."/>
            <person name="Granger G.A."/>
            <person name="Lentz R."/>
            <person name="Raab H."/>
            <person name="Kohr W.J."/>
            <person name="Goeddel D.V."/>
        </authorList>
    </citation>
    <scope>NUCLEOTIDE SEQUENCE [MRNA] (ISOFORM 1)</scope>
    <source>
        <tissue>Placenta</tissue>
    </source>
</reference>
<reference key="3">
    <citation type="journal article" date="1990" name="DNA Cell Biol.">
        <title>Molecular cloning and expression of human and rat tumor necrosis factor receptor chain (p60) and its soluble derivative, tumor necrosis factor-binding protein.</title>
        <authorList>
            <person name="Himmler A."/>
            <person name="Maurer-Fogy I."/>
            <person name="Kroenke M."/>
            <person name="Scheurich P."/>
            <person name="Pfizenmaier K."/>
            <person name="Lantz M."/>
            <person name="Olsson I."/>
            <person name="Hauptmann R."/>
            <person name="Stratowa C."/>
            <person name="Adolf G.R."/>
        </authorList>
    </citation>
    <scope>NUCLEOTIDE SEQUENCE [MRNA] (ISOFORM 1)</scope>
</reference>
<reference key="4">
    <citation type="journal article" date="1990" name="EMBO J.">
        <title>Soluble forms of tumor necrosis factor receptors (TNF-Rs). The cDNA for the type I TNF-R, cloned using amino acid sequence data of its soluble form, encodes both the cell surface and a soluble form of the receptor.</title>
        <authorList>
            <person name="Nophar Y."/>
            <person name="Kemper O."/>
            <person name="Brakebusch C."/>
            <person name="Engelmann H."/>
            <person name="Zwang R."/>
            <person name="Aderka D."/>
            <person name="Holtmann H."/>
            <person name="Wallach D."/>
        </authorList>
    </citation>
    <scope>NUCLEOTIDE SEQUENCE [MRNA] (ISOFORM 1)</scope>
    <scope>PROTEIN SEQUENCE OF 41-53; 110-124 AND 199-201 (ISOFORM 1)</scope>
</reference>
<reference key="5">
    <citation type="journal article" date="1990" name="Proc. Natl. Acad. Sci. U.S.A.">
        <title>Cloning of human tumor necrosis factor (TNF) receptor cDNA and expression of recombinant soluble TNF-binding protein.</title>
        <authorList>
            <person name="Gray P.W."/>
            <person name="Barrett K."/>
            <person name="Chantry D."/>
            <person name="Turner M."/>
            <person name="Feldman M."/>
        </authorList>
    </citation>
    <scope>NUCLEOTIDE SEQUENCE [MRNA] (ISOFORM 1)</scope>
    <source>
        <tissue>Placenta</tissue>
    </source>
</reference>
<reference key="6">
    <citation type="journal article" date="1992" name="Genomics">
        <title>Structure of the human TNF receptor 1 (p60) gene (TNFR1) and localization to chromosome 12p13.</title>
        <authorList>
            <person name="Fuchs P."/>
            <person name="Strehl S."/>
            <person name="Dworzak M."/>
            <person name="Himmler A."/>
            <person name="Ambros P.F."/>
        </authorList>
    </citation>
    <scope>NUCLEOTIDE SEQUENCE [GENOMIC DNA]</scope>
</reference>
<reference key="7">
    <citation type="submission" date="2002-07" db="EMBL/GenBank/DDBJ databases">
        <authorList>
            <consortium name="SeattleSNPs variation discovery resource"/>
        </authorList>
    </citation>
    <scope>NUCLEOTIDE SEQUENCE [GENOMIC DNA]</scope>
    <scope>VARIANTS LEU-75 AND GLN-121</scope>
</reference>
<reference key="8">
    <citation type="journal article" date="2004" name="Nat. Genet.">
        <title>Complete sequencing and characterization of 21,243 full-length human cDNAs.</title>
        <authorList>
            <person name="Ota T."/>
            <person name="Suzuki Y."/>
            <person name="Nishikawa T."/>
            <person name="Otsuki T."/>
            <person name="Sugiyama T."/>
            <person name="Irie R."/>
            <person name="Wakamatsu A."/>
            <person name="Hayashi K."/>
            <person name="Sato H."/>
            <person name="Nagai K."/>
            <person name="Kimura K."/>
            <person name="Makita H."/>
            <person name="Sekine M."/>
            <person name="Obayashi M."/>
            <person name="Nishi T."/>
            <person name="Shibahara T."/>
            <person name="Tanaka T."/>
            <person name="Ishii S."/>
            <person name="Yamamoto J."/>
            <person name="Saito K."/>
            <person name="Kawai Y."/>
            <person name="Isono Y."/>
            <person name="Nakamura Y."/>
            <person name="Nagahari K."/>
            <person name="Murakami K."/>
            <person name="Yasuda T."/>
            <person name="Iwayanagi T."/>
            <person name="Wagatsuma M."/>
            <person name="Shiratori A."/>
            <person name="Sudo H."/>
            <person name="Hosoiri T."/>
            <person name="Kaku Y."/>
            <person name="Kodaira H."/>
            <person name="Kondo H."/>
            <person name="Sugawara M."/>
            <person name="Takahashi M."/>
            <person name="Kanda K."/>
            <person name="Yokoi T."/>
            <person name="Furuya T."/>
            <person name="Kikkawa E."/>
            <person name="Omura Y."/>
            <person name="Abe K."/>
            <person name="Kamihara K."/>
            <person name="Katsuta N."/>
            <person name="Sato K."/>
            <person name="Tanikawa M."/>
            <person name="Yamazaki M."/>
            <person name="Ninomiya K."/>
            <person name="Ishibashi T."/>
            <person name="Yamashita H."/>
            <person name="Murakawa K."/>
            <person name="Fujimori K."/>
            <person name="Tanai H."/>
            <person name="Kimata M."/>
            <person name="Watanabe M."/>
            <person name="Hiraoka S."/>
            <person name="Chiba Y."/>
            <person name="Ishida S."/>
            <person name="Ono Y."/>
            <person name="Takiguchi S."/>
            <person name="Watanabe S."/>
            <person name="Yosida M."/>
            <person name="Hotuta T."/>
            <person name="Kusano J."/>
            <person name="Kanehori K."/>
            <person name="Takahashi-Fujii A."/>
            <person name="Hara H."/>
            <person name="Tanase T.-O."/>
            <person name="Nomura Y."/>
            <person name="Togiya S."/>
            <person name="Komai F."/>
            <person name="Hara R."/>
            <person name="Takeuchi K."/>
            <person name="Arita M."/>
            <person name="Imose N."/>
            <person name="Musashino K."/>
            <person name="Yuuki H."/>
            <person name="Oshima A."/>
            <person name="Sasaki N."/>
            <person name="Aotsuka S."/>
            <person name="Yoshikawa Y."/>
            <person name="Matsunawa H."/>
            <person name="Ichihara T."/>
            <person name="Shiohata N."/>
            <person name="Sano S."/>
            <person name="Moriya S."/>
            <person name="Momiyama H."/>
            <person name="Satoh N."/>
            <person name="Takami S."/>
            <person name="Terashima Y."/>
            <person name="Suzuki O."/>
            <person name="Nakagawa S."/>
            <person name="Senoh A."/>
            <person name="Mizoguchi H."/>
            <person name="Goto Y."/>
            <person name="Shimizu F."/>
            <person name="Wakebe H."/>
            <person name="Hishigaki H."/>
            <person name="Watanabe T."/>
            <person name="Sugiyama A."/>
            <person name="Takemoto M."/>
            <person name="Kawakami B."/>
            <person name="Yamazaki M."/>
            <person name="Watanabe K."/>
            <person name="Kumagai A."/>
            <person name="Itakura S."/>
            <person name="Fukuzumi Y."/>
            <person name="Fujimori Y."/>
            <person name="Komiyama M."/>
            <person name="Tashiro H."/>
            <person name="Tanigami A."/>
            <person name="Fujiwara T."/>
            <person name="Ono T."/>
            <person name="Yamada K."/>
            <person name="Fujii Y."/>
            <person name="Ozaki K."/>
            <person name="Hirao M."/>
            <person name="Ohmori Y."/>
            <person name="Kawabata A."/>
            <person name="Hikiji T."/>
            <person name="Kobatake N."/>
            <person name="Inagaki H."/>
            <person name="Ikema Y."/>
            <person name="Okamoto S."/>
            <person name="Okitani R."/>
            <person name="Kawakami T."/>
            <person name="Noguchi S."/>
            <person name="Itoh T."/>
            <person name="Shigeta K."/>
            <person name="Senba T."/>
            <person name="Matsumura K."/>
            <person name="Nakajima Y."/>
            <person name="Mizuno T."/>
            <person name="Morinaga M."/>
            <person name="Sasaki M."/>
            <person name="Togashi T."/>
            <person name="Oyama M."/>
            <person name="Hata H."/>
            <person name="Watanabe M."/>
            <person name="Komatsu T."/>
            <person name="Mizushima-Sugano J."/>
            <person name="Satoh T."/>
            <person name="Shirai Y."/>
            <person name="Takahashi Y."/>
            <person name="Nakagawa K."/>
            <person name="Okumura K."/>
            <person name="Nagase T."/>
            <person name="Nomura N."/>
            <person name="Kikuchi H."/>
            <person name="Masuho Y."/>
            <person name="Yamashita R."/>
            <person name="Nakai K."/>
            <person name="Yada T."/>
            <person name="Nakamura Y."/>
            <person name="Ohara O."/>
            <person name="Isogai T."/>
            <person name="Sugano S."/>
        </authorList>
    </citation>
    <scope>NUCLEOTIDE SEQUENCE [LARGE SCALE MRNA] (ISOFORMS 1; 2 AND 3)</scope>
    <source>
        <tissue>Neutrophil</tissue>
        <tissue>Teratocarcinoma</tissue>
        <tissue>Tongue</tissue>
        <tissue>Uterus</tissue>
    </source>
</reference>
<reference key="9">
    <citation type="journal article" date="2009" name="BMC Genomics">
        <title>Discovery of novel human transcript variants by analysis of intronic single-block EST with polyadenylation site.</title>
        <authorList>
            <person name="Wang P."/>
            <person name="Yu P."/>
            <person name="Gao P."/>
            <person name="Shi T."/>
            <person name="Ma D."/>
        </authorList>
    </citation>
    <scope>NUCLEOTIDE SEQUENCE [LARGE SCALE MRNA] (ISOFORM 5)</scope>
</reference>
<reference key="10">
    <citation type="journal article" date="2006" name="Nature">
        <title>The finished DNA sequence of human chromosome 12.</title>
        <authorList>
            <person name="Scherer S.E."/>
            <person name="Muzny D.M."/>
            <person name="Buhay C.J."/>
            <person name="Chen R."/>
            <person name="Cree A."/>
            <person name="Ding Y."/>
            <person name="Dugan-Rocha S."/>
            <person name="Gill R."/>
            <person name="Gunaratne P."/>
            <person name="Harris R.A."/>
            <person name="Hawes A.C."/>
            <person name="Hernandez J."/>
            <person name="Hodgson A.V."/>
            <person name="Hume J."/>
            <person name="Jackson A."/>
            <person name="Khan Z.M."/>
            <person name="Kovar-Smith C."/>
            <person name="Lewis L.R."/>
            <person name="Lozado R.J."/>
            <person name="Metzker M.L."/>
            <person name="Milosavljevic A."/>
            <person name="Miner G.R."/>
            <person name="Montgomery K.T."/>
            <person name="Morgan M.B."/>
            <person name="Nazareth L.V."/>
            <person name="Scott G."/>
            <person name="Sodergren E."/>
            <person name="Song X.-Z."/>
            <person name="Steffen D."/>
            <person name="Lovering R.C."/>
            <person name="Wheeler D.A."/>
            <person name="Worley K.C."/>
            <person name="Yuan Y."/>
            <person name="Zhang Z."/>
            <person name="Adams C.Q."/>
            <person name="Ansari-Lari M.A."/>
            <person name="Ayele M."/>
            <person name="Brown M.J."/>
            <person name="Chen G."/>
            <person name="Chen Z."/>
            <person name="Clerc-Blankenburg K.P."/>
            <person name="Davis C."/>
            <person name="Delgado O."/>
            <person name="Dinh H.H."/>
            <person name="Draper H."/>
            <person name="Gonzalez-Garay M.L."/>
            <person name="Havlak P."/>
            <person name="Jackson L.R."/>
            <person name="Jacob L.S."/>
            <person name="Kelly S.H."/>
            <person name="Li L."/>
            <person name="Li Z."/>
            <person name="Liu J."/>
            <person name="Liu W."/>
            <person name="Lu J."/>
            <person name="Maheshwari M."/>
            <person name="Nguyen B.-V."/>
            <person name="Okwuonu G.O."/>
            <person name="Pasternak S."/>
            <person name="Perez L.M."/>
            <person name="Plopper F.J.H."/>
            <person name="Santibanez J."/>
            <person name="Shen H."/>
            <person name="Tabor P.E."/>
            <person name="Verduzco D."/>
            <person name="Waldron L."/>
            <person name="Wang Q."/>
            <person name="Williams G.A."/>
            <person name="Zhang J."/>
            <person name="Zhou J."/>
            <person name="Allen C.C."/>
            <person name="Amin A.G."/>
            <person name="Anyalebechi V."/>
            <person name="Bailey M."/>
            <person name="Barbaria J.A."/>
            <person name="Bimage K.E."/>
            <person name="Bryant N.P."/>
            <person name="Burch P.E."/>
            <person name="Burkett C.E."/>
            <person name="Burrell K.L."/>
            <person name="Calderon E."/>
            <person name="Cardenas V."/>
            <person name="Carter K."/>
            <person name="Casias K."/>
            <person name="Cavazos I."/>
            <person name="Cavazos S.R."/>
            <person name="Ceasar H."/>
            <person name="Chacko J."/>
            <person name="Chan S.N."/>
            <person name="Chavez D."/>
            <person name="Christopoulos C."/>
            <person name="Chu J."/>
            <person name="Cockrell R."/>
            <person name="Cox C.D."/>
            <person name="Dang M."/>
            <person name="Dathorne S.R."/>
            <person name="David R."/>
            <person name="Davis C.M."/>
            <person name="Davy-Carroll L."/>
            <person name="Deshazo D.R."/>
            <person name="Donlin J.E."/>
            <person name="D'Souza L."/>
            <person name="Eaves K.A."/>
            <person name="Egan A."/>
            <person name="Emery-Cohen A.J."/>
            <person name="Escotto M."/>
            <person name="Flagg N."/>
            <person name="Forbes L.D."/>
            <person name="Gabisi A.M."/>
            <person name="Garza M."/>
            <person name="Hamilton C."/>
            <person name="Henderson N."/>
            <person name="Hernandez O."/>
            <person name="Hines S."/>
            <person name="Hogues M.E."/>
            <person name="Huang M."/>
            <person name="Idlebird D.G."/>
            <person name="Johnson R."/>
            <person name="Jolivet A."/>
            <person name="Jones S."/>
            <person name="Kagan R."/>
            <person name="King L.M."/>
            <person name="Leal B."/>
            <person name="Lebow H."/>
            <person name="Lee S."/>
            <person name="LeVan J.M."/>
            <person name="Lewis L.C."/>
            <person name="London P."/>
            <person name="Lorensuhewa L.M."/>
            <person name="Loulseged H."/>
            <person name="Lovett D.A."/>
            <person name="Lucier A."/>
            <person name="Lucier R.L."/>
            <person name="Ma J."/>
            <person name="Madu R.C."/>
            <person name="Mapua P."/>
            <person name="Martindale A.D."/>
            <person name="Martinez E."/>
            <person name="Massey E."/>
            <person name="Mawhiney S."/>
            <person name="Meador M.G."/>
            <person name="Mendez S."/>
            <person name="Mercado C."/>
            <person name="Mercado I.C."/>
            <person name="Merritt C.E."/>
            <person name="Miner Z.L."/>
            <person name="Minja E."/>
            <person name="Mitchell T."/>
            <person name="Mohabbat F."/>
            <person name="Mohabbat K."/>
            <person name="Montgomery B."/>
            <person name="Moore N."/>
            <person name="Morris S."/>
            <person name="Munidasa M."/>
            <person name="Ngo R.N."/>
            <person name="Nguyen N.B."/>
            <person name="Nickerson E."/>
            <person name="Nwaokelemeh O.O."/>
            <person name="Nwokenkwo S."/>
            <person name="Obregon M."/>
            <person name="Oguh M."/>
            <person name="Oragunye N."/>
            <person name="Oviedo R.J."/>
            <person name="Parish B.J."/>
            <person name="Parker D.N."/>
            <person name="Parrish J."/>
            <person name="Parks K.L."/>
            <person name="Paul H.A."/>
            <person name="Payton B.A."/>
            <person name="Perez A."/>
            <person name="Perrin W."/>
            <person name="Pickens A."/>
            <person name="Primus E.L."/>
            <person name="Pu L.-L."/>
            <person name="Puazo M."/>
            <person name="Quiles M.M."/>
            <person name="Quiroz J.B."/>
            <person name="Rabata D."/>
            <person name="Reeves K."/>
            <person name="Ruiz S.J."/>
            <person name="Shao H."/>
            <person name="Sisson I."/>
            <person name="Sonaike T."/>
            <person name="Sorelle R.P."/>
            <person name="Sutton A.E."/>
            <person name="Svatek A.F."/>
            <person name="Svetz L.A."/>
            <person name="Tamerisa K.S."/>
            <person name="Taylor T.R."/>
            <person name="Teague B."/>
            <person name="Thomas N."/>
            <person name="Thorn R.D."/>
            <person name="Trejos Z.Y."/>
            <person name="Trevino B.K."/>
            <person name="Ukegbu O.N."/>
            <person name="Urban J.B."/>
            <person name="Vasquez L.I."/>
            <person name="Vera V.A."/>
            <person name="Villasana D.M."/>
            <person name="Wang L."/>
            <person name="Ward-Moore S."/>
            <person name="Warren J.T."/>
            <person name="Wei X."/>
            <person name="White F."/>
            <person name="Williamson A.L."/>
            <person name="Wleczyk R."/>
            <person name="Wooden H.S."/>
            <person name="Wooden S.H."/>
            <person name="Yen J."/>
            <person name="Yoon L."/>
            <person name="Yoon V."/>
            <person name="Zorrilla S.E."/>
            <person name="Nelson D."/>
            <person name="Kucherlapati R."/>
            <person name="Weinstock G."/>
            <person name="Gibbs R.A."/>
        </authorList>
    </citation>
    <scope>NUCLEOTIDE SEQUENCE [LARGE SCALE GENOMIC DNA]</scope>
</reference>
<reference key="11">
    <citation type="submission" date="2005-09" db="EMBL/GenBank/DDBJ databases">
        <authorList>
            <person name="Mural R.J."/>
            <person name="Istrail S."/>
            <person name="Sutton G.G."/>
            <person name="Florea L."/>
            <person name="Halpern A.L."/>
            <person name="Mobarry C.M."/>
            <person name="Lippert R."/>
            <person name="Walenz B."/>
            <person name="Shatkay H."/>
            <person name="Dew I."/>
            <person name="Miller J.R."/>
            <person name="Flanigan M.J."/>
            <person name="Edwards N.J."/>
            <person name="Bolanos R."/>
            <person name="Fasulo D."/>
            <person name="Halldorsson B.V."/>
            <person name="Hannenhalli S."/>
            <person name="Turner R."/>
            <person name="Yooseph S."/>
            <person name="Lu F."/>
            <person name="Nusskern D.R."/>
            <person name="Shue B.C."/>
            <person name="Zheng X.H."/>
            <person name="Zhong F."/>
            <person name="Delcher A.L."/>
            <person name="Huson D.H."/>
            <person name="Kravitz S.A."/>
            <person name="Mouchard L."/>
            <person name="Reinert K."/>
            <person name="Remington K.A."/>
            <person name="Clark A.G."/>
            <person name="Waterman M.S."/>
            <person name="Eichler E.E."/>
            <person name="Adams M.D."/>
            <person name="Hunkapiller M.W."/>
            <person name="Myers E.W."/>
            <person name="Venter J.C."/>
        </authorList>
    </citation>
    <scope>NUCLEOTIDE SEQUENCE [LARGE SCALE GENOMIC DNA]</scope>
</reference>
<reference key="12">
    <citation type="journal article" date="2004" name="Genome Res.">
        <title>The status, quality, and expansion of the NIH full-length cDNA project: the Mammalian Gene Collection (MGC).</title>
        <authorList>
            <consortium name="The MGC Project Team"/>
        </authorList>
    </citation>
    <scope>NUCLEOTIDE SEQUENCE [LARGE SCALE MRNA] (ISOFORM 1)</scope>
    <source>
        <tissue>Muscle</tissue>
    </source>
</reference>
<reference key="13">
    <citation type="journal article" date="1994" name="Nephron">
        <title>Purification of two types of TNF inhibitors in the urine of the patient with chronic glomerulonephritis.</title>
        <authorList>
            <person name="Suzuki J."/>
            <person name="Tomizawa S."/>
            <person name="Arai H."/>
            <person name="Seki Y."/>
            <person name="Maruyama K."/>
            <person name="Kuroume T."/>
        </authorList>
    </citation>
    <scope>PROTEIN SEQUENCE OF 41-57 (ISOFORM 1)</scope>
    <source>
        <tissue>Urine</tissue>
    </source>
</reference>
<reference key="14">
    <citation type="journal article" date="1990" name="J. Biol. Chem.">
        <title>Two tumor necrosis factor-binding proteins purified from human urine. Evidence for immunological cross-reactivity with cell surface tumor necrosis factor receptors.</title>
        <authorList>
            <person name="Engelmann H."/>
            <person name="Novick D."/>
            <person name="Wallach D."/>
        </authorList>
    </citation>
    <scope>PROTEIN SEQUENCE OF 41-45 (ISOFORM 1)</scope>
</reference>
<reference key="15">
    <citation type="journal article" date="1997" name="J. Biol. Chem.">
        <title>MADD, a novel death domain protein that interacts with the type 1 tumor necrosis factor receptor and activates mitogen-activated protein kinase.</title>
        <authorList>
            <person name="Schievella A.R."/>
            <person name="Chen J.H."/>
            <person name="Graham J.R."/>
            <person name="Lin L.-L."/>
        </authorList>
    </citation>
    <scope>INTERACTION WITH MADD</scope>
</reference>
<reference key="16">
    <citation type="journal article" date="1998" name="J. Virol.">
        <title>Hepatitis C virus core protein binds to the cytoplasmic domain of tumor necrosis factor (TNF) receptor 1 and enhances TNF-induced apoptosis.</title>
        <authorList>
            <person name="Zhu N."/>
            <person name="Khoshnan A."/>
            <person name="Schneider R."/>
            <person name="Matsumoto M."/>
            <person name="Dennert G."/>
            <person name="Ware C.F."/>
            <person name="Lai M.M.C."/>
        </authorList>
    </citation>
    <scope>INTERACTION WITH HCV CORE PROTEIN (MICROBIAL INFECTION)</scope>
</reference>
<reference key="17">
    <citation type="journal article" date="1999" name="EMBO J.">
        <title>The interaction of p62 with RIP links the atypical PKCs to NF-kappaB activation.</title>
        <authorList>
            <person name="Sanz L."/>
            <person name="Sanchez P."/>
            <person name="Lallena M.-J."/>
            <person name="Diaz-Meco M.T."/>
            <person name="Moscat J."/>
        </authorList>
    </citation>
    <scope>INTERACTION WITH RIPK1 AND SQSTM1</scope>
</reference>
<reference key="18">
    <citation type="journal article" date="1999" name="J. Biol. Chem.">
        <title>F1Aalpha, a death receptor-binding protein homologous to the Caenorhabditis elegans sex-determining protein, FEM-1, is a caspase substrate that mediates apoptosis.</title>
        <authorList>
            <person name="Chan S.-L."/>
            <person name="Tan K.-O."/>
            <person name="Zhang L."/>
            <person name="Yee K.S.Y."/>
            <person name="Ronca F."/>
            <person name="Chan M.-Y."/>
            <person name="Yu V.C."/>
        </authorList>
    </citation>
    <scope>INTERACTION WITH FEM1B</scope>
</reference>
<reference key="19">
    <citation type="journal article" date="1999" name="J. Exp. Med.">
        <title>Identification of Grb2 as a novel binding partner of tumor necrosis factor (TNF) receptor I.</title>
        <authorList>
            <person name="Hildt E."/>
            <person name="Oess S."/>
        </authorList>
    </citation>
    <scope>INTERACTION WITH GRB2</scope>
</reference>
<reference key="20">
    <citation type="journal article" date="1999" name="Science">
        <title>Prevention of constitutive TNF receptor 1 signaling by silencer of death domains.</title>
        <authorList>
            <person name="Jiang Y."/>
            <person name="Woronicz J.D."/>
            <person name="Liu W."/>
            <person name="Goeddel D.V."/>
        </authorList>
    </citation>
    <scope>INTERACTION WITH BAG4</scope>
</reference>
<reference key="21">
    <citation type="journal article" date="2004" name="J. Biol. Chem.">
        <title>A death receptor-associated anti-apoptotic protein, BRE, inhibits mitochondrial apoptotic pathway.</title>
        <authorList>
            <person name="Li Q."/>
            <person name="Ching A.K.-K."/>
            <person name="Chan B.C.-L."/>
            <person name="Chow S.K.-Y."/>
            <person name="Lim P.-L."/>
            <person name="Ho T.C.-Y."/>
            <person name="Ip W.-K."/>
            <person name="Wong C.-K."/>
            <person name="Lam C.W.-K."/>
            <person name="Lee K.K.-H."/>
            <person name="Chan J.Y.-H."/>
            <person name="Chui Y.-L."/>
        </authorList>
    </citation>
    <scope>INTERACTION WITH BABAM2</scope>
</reference>
<reference key="22">
    <citation type="journal article" date="2004" name="Nat. Med.">
        <title>Staphylococcus aureus protein A induces airway epithelial inflammatory responses by activating TNFR1.</title>
        <authorList>
            <person name="Gomez M.I."/>
            <person name="Lee A."/>
            <person name="Reddy B."/>
            <person name="Muir A."/>
            <person name="Soong G."/>
            <person name="Pitt A."/>
            <person name="Cheung A."/>
            <person name="Prince A."/>
        </authorList>
    </citation>
    <scope>INTERACTION WITH STAPHYLOCOCCUS AUREUS PROTEIN A (MICROBIAL INFECTION)</scope>
</reference>
<reference key="23">
    <citation type="journal article" date="2006" name="J. Biol. Chem.">
        <title>Staphylococcus aureus protein A activates TNFR1 signaling through conserved IgG binding domains.</title>
        <authorList>
            <person name="Gomez M.I."/>
            <person name="O'Seaghdha M."/>
            <person name="Magargee M."/>
            <person name="Foster T.J."/>
            <person name="Prince A.S."/>
        </authorList>
    </citation>
    <scope>INTERACTION WITH STAPHYLOCOCCUS AUREUS PROTEIN A (MICROBIAL INFECTION)</scope>
</reference>
<reference key="24">
    <citation type="journal article" date="2011" name="J. Virol.">
        <title>The cytomegaloviral protein pUL138 acts as potentiator of tumor necrosis factor (TNF) receptor 1 surface density to enhance ULb'-encoded modulation of TNF-alpha signaling.</title>
        <authorList>
            <person name="Le V.T."/>
            <person name="Trilling M."/>
            <person name="Hengel H."/>
        </authorList>
    </citation>
    <scope>INTERACTION WITH HHV-5 PROTEIN UL138 (MICROBIAL INFECTION)</scope>
</reference>
<reference key="25">
    <citation type="journal article" date="2012" name="Nature">
        <title>TNF receptor 1 genetic risk mirrors outcome of anti-TNF therapy in multiple sclerosis.</title>
        <authorList>
            <person name="Gregory A.P."/>
            <person name="Dendrou C.A."/>
            <person name="Attfield K.E."/>
            <person name="Haghikia A."/>
            <person name="Xifara D.K."/>
            <person name="Butter F."/>
            <person name="Poschmann G."/>
            <person name="Kaur G."/>
            <person name="Lambert L."/>
            <person name="Leach O.A."/>
            <person name="Promel S."/>
            <person name="Punwani D."/>
            <person name="Felce J.H."/>
            <person name="Davis S.J."/>
            <person name="Gold R."/>
            <person name="Nielsen F.C."/>
            <person name="Siegel R.M."/>
            <person name="Mann M."/>
            <person name="Bell J.I."/>
            <person name="McVean G."/>
            <person name="Fugger L."/>
        </authorList>
    </citation>
    <scope>INVOLVEMENT IN MS5</scope>
    <scope>SUBCELLULAR LOCATION</scope>
    <scope>ALTERNATIVE SPLICING (ISOFORM 4)</scope>
</reference>
<reference key="26">
    <citation type="journal article" date="2013" name="Nature">
        <title>Pathogen blocks host death receptor signalling by arginine GlcNAcylation of death domains.</title>
        <authorList>
            <person name="Li S."/>
            <person name="Zhang L."/>
            <person name="Yao Q."/>
            <person name="Li L."/>
            <person name="Dong N."/>
            <person name="Rong J."/>
            <person name="Gao W."/>
            <person name="Ding X."/>
            <person name="Sun L."/>
            <person name="Chen X."/>
            <person name="Chen S."/>
            <person name="Shao F."/>
        </authorList>
    </citation>
    <scope>GLYCOSYLATION AT ARG-376 (MICROBIAL INFECTION)</scope>
</reference>
<reference key="27">
    <citation type="journal article" date="2014" name="Carcinogenesis">
        <title>SH3RF2 functions as an oncogene by mediating PAK4 protein stability.</title>
        <authorList>
            <person name="Kim T.W."/>
            <person name="Kang Y.K."/>
            <person name="Park Z.Y."/>
            <person name="Kim Y.H."/>
            <person name="Hong S.W."/>
            <person name="Oh S.J."/>
            <person name="Sohn H.A."/>
            <person name="Yang S.J."/>
            <person name="Jang Y.J."/>
            <person name="Lee D.C."/>
            <person name="Kim S.Y."/>
            <person name="Yoo H.S."/>
            <person name="Kim E."/>
            <person name="Yeom Y.I."/>
            <person name="Park K.C."/>
        </authorList>
    </citation>
    <scope>INTERACTION WITH SH3RF2; RIPK1 AND TRADD</scope>
</reference>
<reference key="28">
    <citation type="journal article" date="2015" name="J. Biol. Chem.">
        <title>Tag7 (PGLYRP1) in Complex with Hsp70 Induces Alternative Cytotoxic Processes in Tumor Cells via TNFR1 Receptor.</title>
        <authorList>
            <person name="Yashin D.V."/>
            <person name="Ivanova O.K."/>
            <person name="Soshnikova N.V."/>
            <person name="Sheludchenkov A.A."/>
            <person name="Romanova E.A."/>
            <person name="Dukhanina E.A."/>
            <person name="Tonevitsky A.G."/>
            <person name="Gnuchev N.V."/>
            <person name="Gabibov A.G."/>
            <person name="Georgiev G.P."/>
            <person name="Sashchenko L.P."/>
        </authorList>
    </citation>
    <scope>INTERACTION WITH PGLYRP1</scope>
</reference>
<reference key="29">
    <citation type="journal article" date="2017" name="J. Virol.">
        <title>Mumps virus SH protein inhibits NF-kappaB activation by interacting with tumor necrosis factor receptor 1, interleukin-1 receptor 1, and Toll-like receptor 3 complexes.</title>
        <authorList>
            <person name="Franz S."/>
            <person name="Rennert P."/>
            <person name="Woznik M."/>
            <person name="Gruetzke J."/>
            <person name="Luedde A."/>
            <person name="Arriero Pais E.M."/>
            <person name="Finsterbusch T."/>
            <person name="Geyer H."/>
            <person name="Mankertz A."/>
            <person name="Friedrich N."/>
        </authorList>
    </citation>
    <scope>INTERACTION WITH MUMPS VIRUS PROTEIN SH (MICROBIAL INFECTION)</scope>
</reference>
<reference key="30">
    <citation type="journal article" date="2019" name="Mol. Cell">
        <title>Structural and functional insights into host death domains inactivation by the bacterial arginine GlcNAcyltransferase effector.</title>
        <authorList>
            <person name="Ding J."/>
            <person name="Pan X."/>
            <person name="Du L."/>
            <person name="Yao Q."/>
            <person name="Xue J."/>
            <person name="Yao H."/>
            <person name="Wang D.C."/>
            <person name="Li S."/>
            <person name="Shao F."/>
        </authorList>
    </citation>
    <scope>GLYCOSYLATION AT ARG-376 (MICROBIAL INFECTION)</scope>
    <scope>MUTAGENESIS OF ARG-376</scope>
</reference>
<reference key="31">
    <citation type="journal article" date="2020" name="Front. Cell Dev. Biol.">
        <title>Arg-GlcNAcylation on TRADD by NleB and SseK1 is crucial for bacterial pathogenesis.</title>
        <authorList>
            <person name="Xue J."/>
            <person name="Hu S."/>
            <person name="Huang Y."/>
            <person name="Zhang Q."/>
            <person name="Yi X."/>
            <person name="Pan X."/>
            <person name="Li S."/>
        </authorList>
    </citation>
    <scope>GLYCOSYLATION (MICROBIAL INFECTION)</scope>
</reference>
<reference key="32">
    <citation type="journal article" date="1993" name="Cell">
        <title>Crystal structure of the soluble human 55 kd TNF receptor-human TNF beta complex: implications for TNF receptor activation.</title>
        <authorList>
            <person name="Banner D.W."/>
            <person name="D'Arcy A."/>
            <person name="Janes W."/>
            <person name="Gentz R."/>
            <person name="Schoenfeld H.-J."/>
            <person name="Broger C."/>
            <person name="Loetscher H."/>
            <person name="Lesslauer W."/>
        </authorList>
    </citation>
    <scope>X-RAY CRYSTALLOGRAPHY (2.85 ANGSTROMS) OF 30-211 IN COMPLEX WITH TNFB</scope>
</reference>
<reference key="33">
    <citation type="journal article" date="1996" name="Structure">
        <title>Structures of the extracellular domain of the type I tumor necrosis factor receptor.</title>
        <authorList>
            <person name="Naismith J.H."/>
            <person name="Devine T.Q."/>
            <person name="Khono H."/>
            <person name="Sprang S.R."/>
        </authorList>
    </citation>
    <scope>X-RAY CRYSTALLOGRAPHY (1.85 ANGSTROMS) OF 41-202</scope>
</reference>
<reference key="34">
    <citation type="journal article" date="1999" name="Cell">
        <title>Germline mutations in the extracellular domains of the 55 kDa TNF receptor, TNFR1, define a family of dominantly inherited autoinflammatory syndromes.</title>
        <authorList>
            <person name="McDermott M.F."/>
            <person name="Aksentijevich I."/>
            <person name="Galon J."/>
            <person name="McDermott E.M."/>
            <person name="Ogunkolade B.W."/>
            <person name="Centola M."/>
            <person name="Mansfield E."/>
            <person name="Gadina M."/>
            <person name="Karenko L."/>
            <person name="Pettersson T."/>
            <person name="McCarthy J."/>
            <person name="Frucht D.M."/>
            <person name="Aringer M."/>
            <person name="Torosyan Y."/>
            <person name="Teppo A.-M."/>
            <person name="Wilson M."/>
            <person name="Karaarslan H.M."/>
            <person name="Wan Y."/>
            <person name="Todd I."/>
            <person name="Wood G."/>
            <person name="Schlimgen R."/>
            <person name="Kumarajeewa T.R."/>
            <person name="Cooper S.M."/>
            <person name="Vella J.P."/>
            <person name="Amos C.I."/>
            <person name="Mulley J."/>
            <person name="Quane K.A."/>
            <person name="Molloy M.G."/>
            <person name="Rnaki A."/>
            <person name="Powell R.J."/>
            <person name="Hitman G.A."/>
            <person name="O'Shea J."/>
            <person name="Kastner D.L."/>
        </authorList>
    </citation>
    <scope>VARIANTS FPF ARG-59; TYR-62; MET-79; PHE-81; ARG-117 AND TYR-117</scope>
</reference>
<reference key="35">
    <citation type="journal article" date="2000" name="Arthritis Rheum.">
        <title>A novel missense mutation (C30S) in the gene encoding tumor necrosis factor receptor 1 linked to autosomal-dominant recurrent fever with localized myositis in a French family.</title>
        <authorList>
            <person name="Dode C."/>
            <person name="Papo T."/>
            <person name="Fieschi C."/>
            <person name="Pecheux C."/>
            <person name="Dion E."/>
            <person name="Picard F."/>
            <person name="Godeau P."/>
            <person name="Bienvenu J."/>
            <person name="Piette J.-C."/>
            <person name="Delpech M."/>
            <person name="Grateau G."/>
        </authorList>
    </citation>
    <scope>VARIANT FPF SER-59</scope>
</reference>
<reference key="36">
    <citation type="journal article" date="2001" name="Am. J. Hum. Genet.">
        <title>The tumor-necrosis-factor receptor-associated periodic syndrome: new mutations in TNFRSF1A, ancestral origins, genotype-phenotype studies, and evidence for further genetic heterogeneity of periodic fevers.</title>
        <authorList>
            <person name="Aksentijevich I."/>
            <person name="Galon J."/>
            <person name="Soares M."/>
            <person name="Mansfield E."/>
            <person name="Hull K."/>
            <person name="Oh H.-H."/>
            <person name="Goldbach-Mansky R."/>
            <person name="Dean J."/>
            <person name="Athreya B."/>
            <person name="Reginato A.J."/>
            <person name="Henrickson M."/>
            <person name="Pons-Estel B."/>
            <person name="O'Shea J.J."/>
            <person name="Kastner D.L."/>
        </authorList>
    </citation>
    <scope>VARIANTS FPF GLN-51; SER-59; GLY-62; LEU-75; GLY-115 AND GLN-121</scope>
</reference>
<reference key="37">
    <citation type="journal article" date="2003" name="Arthritis Rheum.">
        <title>Heterogeneity among patients with tumor necrosis factor receptor-associated periodic syndrome phenotypes.</title>
        <authorList>
            <person name="Aganna E."/>
            <person name="Hammond L."/>
            <person name="Hawkins P.N."/>
            <person name="Aldea A."/>
            <person name="McKee S.A."/>
            <person name="Ploos van Amstel H.K."/>
            <person name="Mischung C."/>
            <person name="Kusuhara K."/>
            <person name="Saulsbury F.T."/>
            <person name="Lachmann H.J."/>
            <person name="Bybee A."/>
            <person name="McDermott E.M."/>
            <person name="La Regina M."/>
            <person name="Arostegui J.I."/>
            <person name="Campistol J.M."/>
            <person name="Worthington S."/>
            <person name="High K.P."/>
            <person name="Molloy M.G."/>
            <person name="Baker N."/>
            <person name="Bidwell J.L."/>
            <person name="Castaner J.L."/>
            <person name="Whiteford M.L."/>
            <person name="Janssens-Korpola P.L."/>
            <person name="Manna R."/>
            <person name="Powell R.J."/>
            <person name="Woo P."/>
            <person name="Solis P."/>
            <person name="Minden K."/>
            <person name="Frenkel J."/>
            <person name="Yague J."/>
            <person name="Mirakian R.M."/>
            <person name="Hitman G.A."/>
            <person name="McDermott M.F."/>
        </authorList>
    </citation>
    <scope>VARIANTS FPF SER-99 AND PRO-121</scope>
</reference>
<reference key="38">
    <citation type="journal article" date="2004" name="Eur. J. Pediatr.">
        <title>Tumour necrosis factor receptor-associated periodic syndrome with a novel mutation in the TNFRSF1A gene in a Japanese family.</title>
        <authorList>
            <person name="Kusuhara K."/>
            <person name="Nomura A."/>
            <person name="Nakao F."/>
            <person name="Hara T."/>
        </authorList>
    </citation>
    <scope>VARIANT FPF SER-99</scope>
</reference>
<feature type="signal peptide" evidence="17">
    <location>
        <begin position="1"/>
        <end position="29"/>
    </location>
</feature>
<feature type="chain" id="PRO_0000034543" description="Tumor necrosis factor receptor superfamily member 1A, membrane form">
    <location>
        <begin position="30"/>
        <end position="455"/>
    </location>
</feature>
<feature type="chain" id="PRO_0000034544" description="Tumor necrosis factor-binding protein 1">
    <location>
        <begin position="41"/>
        <end position="201"/>
    </location>
</feature>
<feature type="topological domain" description="Extracellular" evidence="3">
    <location>
        <begin position="30"/>
        <end position="211"/>
    </location>
</feature>
<feature type="transmembrane region" description="Helical" evidence="3">
    <location>
        <begin position="212"/>
        <end position="232"/>
    </location>
</feature>
<feature type="topological domain" description="Cytoplasmic" evidence="3">
    <location>
        <begin position="233"/>
        <end position="455"/>
    </location>
</feature>
<feature type="repeat" description="TNFR-Cys 1">
    <location>
        <begin position="43"/>
        <end position="82"/>
    </location>
</feature>
<feature type="repeat" description="TNFR-Cys 2">
    <location>
        <begin position="83"/>
        <end position="125"/>
    </location>
</feature>
<feature type="repeat" description="TNFR-Cys 3">
    <location>
        <begin position="126"/>
        <end position="166"/>
    </location>
</feature>
<feature type="repeat" description="TNFR-Cys 4">
    <location>
        <begin position="167"/>
        <end position="196"/>
    </location>
</feature>
<feature type="domain" description="Death" evidence="4">
    <location>
        <begin position="356"/>
        <end position="441"/>
    </location>
</feature>
<feature type="region of interest" description="Disordered" evidence="5">
    <location>
        <begin position="254"/>
        <end position="273"/>
    </location>
</feature>
<feature type="region of interest" description="N-SMase activation domain (NSD)">
    <location>
        <begin position="338"/>
        <end position="348"/>
    </location>
</feature>
<feature type="glycosylation site" description="N-linked (GlcNAc...) asparagine" evidence="3">
    <location>
        <position position="54"/>
    </location>
</feature>
<feature type="glycosylation site" description="N-linked (GlcNAc...) asparagine" evidence="3">
    <location>
        <position position="145"/>
    </location>
</feature>
<feature type="glycosylation site" description="N-linked (GlcNAc...) asparagine" evidence="3">
    <location>
        <position position="151"/>
    </location>
</feature>
<feature type="glycosylation site" description="(Microbial infection) N-beta-linked (GlcNAc) arginine" evidence="23 33">
    <location>
        <position position="376"/>
    </location>
</feature>
<feature type="disulfide bond">
    <location>
        <begin position="44"/>
        <end position="58"/>
    </location>
</feature>
<feature type="disulfide bond">
    <location>
        <begin position="59"/>
        <end position="72"/>
    </location>
</feature>
<feature type="disulfide bond">
    <location>
        <begin position="62"/>
        <end position="81"/>
    </location>
</feature>
<feature type="disulfide bond">
    <location>
        <begin position="84"/>
        <end position="99"/>
    </location>
</feature>
<feature type="disulfide bond">
    <location>
        <begin position="102"/>
        <end position="117"/>
    </location>
</feature>
<feature type="disulfide bond">
    <location>
        <begin position="105"/>
        <end position="125"/>
    </location>
</feature>
<feature type="disulfide bond">
    <location>
        <begin position="127"/>
        <end position="143"/>
    </location>
</feature>
<feature type="disulfide bond">
    <location>
        <begin position="146"/>
        <end position="158"/>
    </location>
</feature>
<feature type="disulfide bond">
    <location>
        <begin position="149"/>
        <end position="166"/>
    </location>
</feature>
<feature type="disulfide bond">
    <location>
        <begin position="168"/>
        <end position="179"/>
    </location>
</feature>
<feature type="disulfide bond">
    <location>
        <begin position="182"/>
        <end position="195"/>
    </location>
</feature>
<feature type="disulfide bond">
    <location>
        <begin position="185"/>
        <end position="191"/>
    </location>
</feature>
<feature type="splice variant" id="VSP_037154" description="In isoform 3." evidence="30">
    <location>
        <begin position="1"/>
        <end position="232"/>
    </location>
</feature>
<feature type="splice variant" id="VSP_037153" description="In isoform 2." evidence="30">
    <location>
        <begin position="1"/>
        <end position="108"/>
    </location>
</feature>
<feature type="splice variant" id="VSP_044949" description="In isoform 4." evidence="32">
    <original>NCKKSLECTKLCLPQIENVKGTEDSGTTVLLPLVIFFGLCLLSLLFIGLMYRYQRWKSKLYSIVCGKSTPEKEGELEGTTTKPLAPNPSFSPTPGFTPTLGFSPVPSSTFTSSSTYTPGDCPNFAAPRREVAPPYQGADPILATALASDPIPNPLQKWEDSAHKPQSLDTDDPATLYAVVENVPPLRWKEFVRRLGLSDHEIDRLELQNGRCLREAQYSMLATWRRRTPRREATLELLGRVLRDMDLLGCLEDIEEALCGPAALPPAPSLLR</original>
    <variation>KHHSAVAPGHFLWSLPFIPPLHWFNVSLPTVEVQALLHCLWEIDT</variation>
    <location>
        <begin position="184"/>
        <end position="455"/>
    </location>
</feature>
<feature type="splice variant" id="VSP_047613" description="In isoform 5." evidence="31">
    <original>NCKKSLECTKLCLPQIENVKGTEDSGTTVLLPLVI</original>
    <variation>KVLLCRPGWNAVARSRLTATSASQIQAILLLQPPK</variation>
    <location>
        <begin position="184"/>
        <end position="218"/>
    </location>
</feature>
<feature type="splice variant" id="VSP_047614" description="In isoform 5." evidence="31">
    <location>
        <begin position="219"/>
        <end position="455"/>
    </location>
</feature>
<feature type="sequence variant" id="VAR_019329" description="In FPF; dbSNP:rs104895254." evidence="11">
    <original>H</original>
    <variation>Q</variation>
    <location>
        <position position="51"/>
    </location>
</feature>
<feature type="sequence variant" id="VAR_013410" description="In FPF; dbSNP:rs104895217." evidence="6">
    <original>C</original>
    <variation>R</variation>
    <location>
        <position position="59"/>
    </location>
</feature>
<feature type="sequence variant" id="VAR_019302" description="In FPF; dbSNP:rs104895223." evidence="10 11">
    <original>C</original>
    <variation>S</variation>
    <location>
        <position position="59"/>
    </location>
</feature>
<feature type="sequence variant" id="VAR_019303" description="In FPF; dbSNP:rs104895225." evidence="11">
    <original>C</original>
    <variation>G</variation>
    <location>
        <position position="62"/>
    </location>
</feature>
<feature type="sequence variant" id="VAR_013411" description="In FPF; dbSNP:rs104895218." evidence="6">
    <original>C</original>
    <variation>Y</variation>
    <location>
        <position position="62"/>
    </location>
</feature>
<feature type="sequence variant" id="VAR_019330" description="In FPF; benign; dbSNP:rs4149637." evidence="11 29">
    <original>P</original>
    <variation>L</variation>
    <location>
        <position position="75"/>
    </location>
</feature>
<feature type="sequence variant" id="VAR_013412" description="In FPF; dbSNP:rs104895219." evidence="6">
    <original>T</original>
    <variation>M</variation>
    <location>
        <position position="79"/>
    </location>
</feature>
<feature type="sequence variant" id="VAR_013413" description="In FPF; dbSNP:rs104895220." evidence="6">
    <original>C</original>
    <variation>F</variation>
    <location>
        <position position="81"/>
    </location>
</feature>
<feature type="sequence variant" id="VAR_019304" description="In FPF; dbSNP:rs104895228." evidence="12 13">
    <original>C</original>
    <variation>S</variation>
    <location>
        <position position="99"/>
    </location>
</feature>
<feature type="sequence variant" id="VAR_019331" description="In FPF." evidence="11">
    <original>S</original>
    <variation>G</variation>
    <location>
        <position position="115"/>
    </location>
</feature>
<feature type="sequence variant" id="VAR_013414" description="In FPF; dbSNP:rs104895221." evidence="6">
    <original>C</original>
    <variation>R</variation>
    <location>
        <position position="117"/>
    </location>
</feature>
<feature type="sequence variant" id="VAR_013415" description="In FPF; dbSNP:rs104895222." evidence="6">
    <original>C</original>
    <variation>Y</variation>
    <location>
        <position position="117"/>
    </location>
</feature>
<feature type="sequence variant" id="VAR_019305" description="In FPF; dbSNP:rs4149584." evidence="12">
    <original>R</original>
    <variation>P</variation>
    <location>
        <position position="121"/>
    </location>
</feature>
<feature type="sequence variant" id="VAR_019332" description="In FPF; uncertain significance; dbSNP:rs4149584." evidence="11 29">
    <original>R</original>
    <variation>Q</variation>
    <location>
        <position position="121"/>
    </location>
</feature>
<feature type="sequence variant" id="VAR_011813" description="In dbSNP:rs1804532.">
    <original>P</original>
    <variation>T</variation>
    <location>
        <position position="305"/>
    </location>
</feature>
<feature type="mutagenesis site" description="Abolished GlcNAcylation by E.coli NleB1." evidence="23">
    <original>R</original>
    <variation>A</variation>
    <location>
        <position position="376"/>
    </location>
</feature>
<feature type="sequence conflict" description="In Ref. 8; BAG51763." evidence="32" ref="8">
    <original>L</original>
    <variation>LILPQ</variation>
    <location>
        <position position="13"/>
    </location>
</feature>
<feature type="sequence conflict" description="In Ref. 8; BAG37891." evidence="32" ref="8">
    <original>K</original>
    <variation>E</variation>
    <location>
        <position position="255"/>
    </location>
</feature>
<feature type="sequence conflict" description="In Ref. 8; BAG51763." evidence="32" ref="8">
    <original>S</original>
    <variation>G</variation>
    <location>
        <position position="286"/>
    </location>
</feature>
<feature type="sequence conflict" description="In Ref. 8; BAF83777." evidence="32" ref="8">
    <original>R</original>
    <variation>L</variation>
    <location>
        <position position="394"/>
    </location>
</feature>
<feature type="sequence conflict" description="In Ref. 5; AAA36756." evidence="32" ref="5">
    <location>
        <position position="412"/>
    </location>
</feature>
<feature type="sequence conflict" description="In Ref. 5; AAA36756." evidence="32" ref="5">
    <original>GPAA</original>
    <variation>APP</variation>
    <location>
        <begin position="443"/>
        <end position="446"/>
    </location>
</feature>
<feature type="strand" evidence="34">
    <location>
        <begin position="48"/>
        <end position="50"/>
    </location>
</feature>
<feature type="strand" evidence="35">
    <location>
        <begin position="52"/>
        <end position="54"/>
    </location>
</feature>
<feature type="strand" evidence="34">
    <location>
        <begin position="58"/>
        <end position="60"/>
    </location>
</feature>
<feature type="strand" evidence="34">
    <location>
        <begin position="66"/>
        <end position="70"/>
    </location>
</feature>
<feature type="strand" evidence="39">
    <location>
        <begin position="73"/>
        <end position="77"/>
    </location>
</feature>
<feature type="strand" evidence="34">
    <location>
        <begin position="80"/>
        <end position="83"/>
    </location>
</feature>
<feature type="strand" evidence="34">
    <location>
        <begin position="92"/>
        <end position="94"/>
    </location>
</feature>
<feature type="helix" evidence="40">
    <location>
        <begin position="107"/>
        <end position="109"/>
    </location>
</feature>
<feature type="strand" evidence="40">
    <location>
        <begin position="112"/>
        <end position="115"/>
    </location>
</feature>
<feature type="strand" evidence="40">
    <location>
        <begin position="119"/>
        <end position="121"/>
    </location>
</feature>
<feature type="strand" evidence="40">
    <location>
        <begin position="124"/>
        <end position="126"/>
    </location>
</feature>
<feature type="strand" evidence="40">
    <location>
        <begin position="132"/>
        <end position="139"/>
    </location>
</feature>
<feature type="strand" evidence="40">
    <location>
        <begin position="141"/>
        <end position="144"/>
    </location>
</feature>
<feature type="strand" evidence="34">
    <location>
        <begin position="152"/>
        <end position="156"/>
    </location>
</feature>
<feature type="strand" evidence="37">
    <location>
        <begin position="160"/>
        <end position="162"/>
    </location>
</feature>
<feature type="strand" evidence="34">
    <location>
        <begin position="165"/>
        <end position="168"/>
    </location>
</feature>
<feature type="strand" evidence="34">
    <location>
        <begin position="172"/>
        <end position="175"/>
    </location>
</feature>
<feature type="strand" evidence="34">
    <location>
        <begin position="178"/>
        <end position="181"/>
    </location>
</feature>
<feature type="helix" evidence="34">
    <location>
        <begin position="182"/>
        <end position="184"/>
    </location>
</feature>
<feature type="helix" evidence="34">
    <location>
        <begin position="192"/>
        <end position="195"/>
    </location>
</feature>
<feature type="helix" evidence="38">
    <location>
        <begin position="213"/>
        <end position="236"/>
    </location>
</feature>
<feature type="helix" evidence="36">
    <location>
        <begin position="357"/>
        <end position="365"/>
    </location>
</feature>
<feature type="helix" evidence="36">
    <location>
        <begin position="371"/>
        <end position="378"/>
    </location>
</feature>
<feature type="helix" evidence="36">
    <location>
        <begin position="382"/>
        <end position="391"/>
    </location>
</feature>
<feature type="helix" evidence="36">
    <location>
        <begin position="396"/>
        <end position="410"/>
    </location>
</feature>
<feature type="helix" evidence="36">
    <location>
        <begin position="417"/>
        <end position="427"/>
    </location>
</feature>
<feature type="helix" evidence="36">
    <location>
        <begin position="431"/>
        <end position="441"/>
    </location>
</feature>
<dbReference type="EMBL" id="M58286">
    <property type="protein sequence ID" value="AAA36753.1"/>
    <property type="molecule type" value="mRNA"/>
</dbReference>
<dbReference type="EMBL" id="M33294">
    <property type="protein sequence ID" value="AAA03210.1"/>
    <property type="molecule type" value="mRNA"/>
</dbReference>
<dbReference type="EMBL" id="M63121">
    <property type="protein sequence ID" value="AAA36754.1"/>
    <property type="molecule type" value="mRNA"/>
</dbReference>
<dbReference type="EMBL" id="X55313">
    <property type="protein sequence ID" value="CAA39021.1"/>
    <property type="molecule type" value="mRNA"/>
</dbReference>
<dbReference type="EMBL" id="M60275">
    <property type="protein sequence ID" value="AAA36756.1"/>
    <property type="molecule type" value="mRNA"/>
</dbReference>
<dbReference type="EMBL" id="M75866">
    <property type="protein sequence ID" value="AAA61201.1"/>
    <property type="molecule type" value="Genomic_DNA"/>
</dbReference>
<dbReference type="EMBL" id="M75864">
    <property type="protein sequence ID" value="AAA61201.1"/>
    <property type="status" value="JOINED"/>
    <property type="molecule type" value="Genomic_DNA"/>
</dbReference>
<dbReference type="EMBL" id="M75865">
    <property type="protein sequence ID" value="AAA61201.1"/>
    <property type="status" value="JOINED"/>
    <property type="molecule type" value="Genomic_DNA"/>
</dbReference>
<dbReference type="EMBL" id="AY131997">
    <property type="protein sequence ID" value="AAM77802.1"/>
    <property type="molecule type" value="Genomic_DNA"/>
</dbReference>
<dbReference type="EMBL" id="AK056611">
    <property type="protein sequence ID" value="BAG51763.1"/>
    <property type="molecule type" value="mRNA"/>
</dbReference>
<dbReference type="EMBL" id="AK291088">
    <property type="protein sequence ID" value="BAF83777.1"/>
    <property type="molecule type" value="mRNA"/>
</dbReference>
<dbReference type="EMBL" id="AK298729">
    <property type="protein sequence ID" value="BAG60879.1"/>
    <property type="molecule type" value="mRNA"/>
</dbReference>
<dbReference type="EMBL" id="AK304517">
    <property type="protein sequence ID" value="BAG65321.1"/>
    <property type="molecule type" value="mRNA"/>
</dbReference>
<dbReference type="EMBL" id="AK315509">
    <property type="protein sequence ID" value="BAG37891.1"/>
    <property type="molecule type" value="mRNA"/>
</dbReference>
<dbReference type="EMBL" id="EU927389">
    <property type="protein sequence ID" value="ACH57451.1"/>
    <property type="molecule type" value="mRNA"/>
</dbReference>
<dbReference type="EMBL" id="AC006057">
    <property type="status" value="NOT_ANNOTATED_CDS"/>
    <property type="molecule type" value="Genomic_DNA"/>
</dbReference>
<dbReference type="EMBL" id="CH471116">
    <property type="protein sequence ID" value="EAW88805.1"/>
    <property type="molecule type" value="Genomic_DNA"/>
</dbReference>
<dbReference type="EMBL" id="CH471116">
    <property type="protein sequence ID" value="EAW88806.1"/>
    <property type="molecule type" value="Genomic_DNA"/>
</dbReference>
<dbReference type="EMBL" id="BC010140">
    <property type="protein sequence ID" value="AAH10140.1"/>
    <property type="molecule type" value="mRNA"/>
</dbReference>
<dbReference type="CCDS" id="CCDS8542.1">
    <molecule id="P19438-1"/>
</dbReference>
<dbReference type="PIR" id="A38208">
    <property type="entry name" value="GQHUT1"/>
</dbReference>
<dbReference type="RefSeq" id="NP_001056.1">
    <molecule id="P19438-1"/>
    <property type="nucleotide sequence ID" value="NM_001065.4"/>
</dbReference>
<dbReference type="RefSeq" id="NP_001333020.1">
    <molecule id="P19438-2"/>
    <property type="nucleotide sequence ID" value="NM_001346091.2"/>
</dbReference>
<dbReference type="RefSeq" id="NP_001333021.1">
    <property type="nucleotide sequence ID" value="NM_001346092.1"/>
</dbReference>
<dbReference type="PDB" id="1EXT">
    <property type="method" value="X-ray"/>
    <property type="resolution" value="1.85 A"/>
    <property type="chains" value="A/B=41-201"/>
</dbReference>
<dbReference type="PDB" id="1FT4">
    <property type="method" value="X-ray"/>
    <property type="resolution" value="2.90 A"/>
    <property type="chains" value="A/B=41-201"/>
</dbReference>
<dbReference type="PDB" id="1ICH">
    <property type="method" value="NMR"/>
    <property type="chains" value="A=345-455"/>
</dbReference>
<dbReference type="PDB" id="1NCF">
    <property type="method" value="X-ray"/>
    <property type="resolution" value="2.25 A"/>
    <property type="chains" value="A/B=41-201"/>
</dbReference>
<dbReference type="PDB" id="1TNR">
    <property type="method" value="X-ray"/>
    <property type="resolution" value="2.85 A"/>
    <property type="chains" value="R=44-182"/>
</dbReference>
<dbReference type="PDB" id="7K7A">
    <property type="method" value="NMR"/>
    <property type="chains" value="A/B/C=209-238"/>
</dbReference>
<dbReference type="PDB" id="7KP7">
    <property type="method" value="X-ray"/>
    <property type="resolution" value="2.65 A"/>
    <property type="chains" value="D/E/F=42-184"/>
</dbReference>
<dbReference type="PDB" id="7KP8">
    <property type="method" value="X-ray"/>
    <property type="resolution" value="3.15 A"/>
    <property type="chains" value="E/F=43-184"/>
</dbReference>
<dbReference type="PDB" id="7KPB">
    <property type="method" value="X-ray"/>
    <property type="resolution" value="3.00 A"/>
    <property type="chains" value="E/F=42-184"/>
</dbReference>
<dbReference type="PDB" id="8P6Q">
    <property type="method" value="X-ray"/>
    <property type="resolution" value="1.40 A"/>
    <property type="chains" value="A=101-145"/>
</dbReference>
<dbReference type="PDBsum" id="1EXT"/>
<dbReference type="PDBsum" id="1FT4"/>
<dbReference type="PDBsum" id="1ICH"/>
<dbReference type="PDBsum" id="1NCF"/>
<dbReference type="PDBsum" id="1TNR"/>
<dbReference type="PDBsum" id="7K7A"/>
<dbReference type="PDBsum" id="7KP7"/>
<dbReference type="PDBsum" id="7KP8"/>
<dbReference type="PDBsum" id="7KPB"/>
<dbReference type="PDBsum" id="8P6Q"/>
<dbReference type="BMRB" id="P19438"/>
<dbReference type="SMR" id="P19438"/>
<dbReference type="BioGRID" id="112986">
    <property type="interactions" value="209"/>
</dbReference>
<dbReference type="ComplexPortal" id="CPX-25723">
    <property type="entry name" value="sTNF-TNR1A receptor-ligand core complex, BIRC3 variant"/>
</dbReference>
<dbReference type="ComplexPortal" id="CPX-25726">
    <property type="entry name" value="mTNF-TNR1A receptor-ligand core complex, BIRC3 variant"/>
</dbReference>
<dbReference type="ComplexPortal" id="CPX-8828">
    <property type="entry name" value="sTNF-TNR1A receptor-ligand core complex, BIRC2 variant"/>
</dbReference>
<dbReference type="ComplexPortal" id="CPX-8932">
    <property type="entry name" value="mTNF-TNR1A receptor-ligand core complex, BIRC2 variant"/>
</dbReference>
<dbReference type="ComplexPortal" id="CPX-8945">
    <property type="entry name" value="Lymphotoxin-alpha-TNFRSF1A receptor complex"/>
</dbReference>
<dbReference type="CORUM" id="P19438"/>
<dbReference type="DIP" id="DIP-407N"/>
<dbReference type="FunCoup" id="P19438">
    <property type="interactions" value="1321"/>
</dbReference>
<dbReference type="IntAct" id="P19438">
    <property type="interactions" value="102"/>
</dbReference>
<dbReference type="MINT" id="P19438"/>
<dbReference type="STRING" id="9606.ENSP00000162749"/>
<dbReference type="BindingDB" id="P19438"/>
<dbReference type="ChEMBL" id="CHEMBL3378"/>
<dbReference type="DrugBank" id="DB03507">
    <property type="generic name" value="6-[3-(4-Morpholinyl)Propyl]-2-(3-Nitrophenyl)-5-Thioxo-5,6,-Dihydro-7h-Thienol[2',3':4,5]Pyrrolo[1,2-C]Imidazol-7-One"/>
</dbReference>
<dbReference type="DrugBank" id="DB11626">
    <property type="generic name" value="Tasonermin"/>
</dbReference>
<dbReference type="DrugCentral" id="P19438"/>
<dbReference type="GlyCosmos" id="P19438">
    <property type="glycosylation" value="4 sites, No reported glycans"/>
</dbReference>
<dbReference type="GlyGen" id="P19438">
    <property type="glycosylation" value="5 sites, 2 N-linked glycans (1 site)"/>
</dbReference>
<dbReference type="iPTMnet" id="P19438"/>
<dbReference type="PhosphoSitePlus" id="P19438"/>
<dbReference type="SwissPalm" id="P19438"/>
<dbReference type="BioMuta" id="TNFRSF1A"/>
<dbReference type="DMDM" id="135959"/>
<dbReference type="jPOST" id="P19438"/>
<dbReference type="MassIVE" id="P19438"/>
<dbReference type="PaxDb" id="9606-ENSP00000162749"/>
<dbReference type="PeptideAtlas" id="P19438"/>
<dbReference type="ProteomicsDB" id="53659">
    <molecule id="P19438-1"/>
</dbReference>
<dbReference type="ProteomicsDB" id="53660">
    <molecule id="P19438-2"/>
</dbReference>
<dbReference type="ProteomicsDB" id="53661">
    <molecule id="P19438-3"/>
</dbReference>
<dbReference type="ProteomicsDB" id="5939"/>
<dbReference type="ABCD" id="P19438">
    <property type="antibodies" value="189 sequenced antibodies"/>
</dbReference>
<dbReference type="Antibodypedia" id="1320">
    <property type="antibodies" value="1493 antibodies from 50 providers"/>
</dbReference>
<dbReference type="DNASU" id="7132"/>
<dbReference type="Ensembl" id="ENST00000162749.7">
    <molecule id="P19438-1"/>
    <property type="protein sequence ID" value="ENSP00000162749.2"/>
    <property type="gene ID" value="ENSG00000067182.9"/>
</dbReference>
<dbReference type="Ensembl" id="ENST00000437813.8">
    <molecule id="P19438-5"/>
    <property type="protein sequence ID" value="ENSP00000513672.1"/>
    <property type="gene ID" value="ENSG00000067182.9"/>
</dbReference>
<dbReference type="Ensembl" id="ENST00000698339.1">
    <molecule id="P19438-5"/>
    <property type="protein sequence ID" value="ENSP00000513670.1"/>
    <property type="gene ID" value="ENSG00000067182.9"/>
</dbReference>
<dbReference type="Ensembl" id="ENST00000698340.1">
    <molecule id="P19438-4"/>
    <property type="protein sequence ID" value="ENSP00000513671.1"/>
    <property type="gene ID" value="ENSG00000067182.9"/>
</dbReference>
<dbReference type="GeneID" id="7132"/>
<dbReference type="KEGG" id="hsa:7132"/>
<dbReference type="MANE-Select" id="ENST00000162749.7">
    <property type="protein sequence ID" value="ENSP00000162749.2"/>
    <property type="RefSeq nucleotide sequence ID" value="NM_001065.4"/>
    <property type="RefSeq protein sequence ID" value="NP_001056.1"/>
</dbReference>
<dbReference type="UCSC" id="uc001qnu.4">
    <molecule id="P19438-1"/>
    <property type="organism name" value="human"/>
</dbReference>
<dbReference type="AGR" id="HGNC:11916"/>
<dbReference type="CTD" id="7132"/>
<dbReference type="DisGeNET" id="7132"/>
<dbReference type="GeneCards" id="TNFRSF1A"/>
<dbReference type="GeneReviews" id="TNFRSF1A"/>
<dbReference type="HGNC" id="HGNC:11916">
    <property type="gene designation" value="TNFRSF1A"/>
</dbReference>
<dbReference type="HPA" id="ENSG00000067182">
    <property type="expression patterns" value="Low tissue specificity"/>
</dbReference>
<dbReference type="MalaCards" id="TNFRSF1A"/>
<dbReference type="MIM" id="142680">
    <property type="type" value="phenotype"/>
</dbReference>
<dbReference type="MIM" id="191190">
    <property type="type" value="gene"/>
</dbReference>
<dbReference type="MIM" id="614810">
    <property type="type" value="phenotype"/>
</dbReference>
<dbReference type="neXtProt" id="NX_P19438"/>
<dbReference type="OpenTargets" id="ENSG00000067182"/>
<dbReference type="Orphanet" id="329967">
    <property type="disease" value="Intermittent hydrarthrosis"/>
</dbReference>
<dbReference type="Orphanet" id="32960">
    <property type="disease" value="Tumor necrosis factor receptor 1 associated periodic syndrome"/>
</dbReference>
<dbReference type="PharmGKB" id="PA36609"/>
<dbReference type="VEuPathDB" id="HostDB:ENSG00000067182"/>
<dbReference type="eggNOG" id="ENOG502S050">
    <property type="taxonomic scope" value="Eukaryota"/>
</dbReference>
<dbReference type="GeneTree" id="ENSGT00940000159540"/>
<dbReference type="HOGENOM" id="CLU_050864_0_0_1"/>
<dbReference type="InParanoid" id="P19438"/>
<dbReference type="OMA" id="IVETPCT"/>
<dbReference type="OrthoDB" id="9408020at2759"/>
<dbReference type="PAN-GO" id="P19438">
    <property type="GO annotations" value="6 GO annotations based on evolutionary models"/>
</dbReference>
<dbReference type="PhylomeDB" id="P19438"/>
<dbReference type="TreeFam" id="TF333916"/>
<dbReference type="PathwayCommons" id="P19438"/>
<dbReference type="Reactome" id="R-HSA-5357786">
    <property type="pathway name" value="TNFR1-induced proapoptotic signaling"/>
</dbReference>
<dbReference type="Reactome" id="R-HSA-5357905">
    <property type="pathway name" value="Regulation of TNFR1 signaling"/>
</dbReference>
<dbReference type="Reactome" id="R-HSA-5357956">
    <property type="pathway name" value="TNFR1-induced NF-kappa-B signaling pathway"/>
</dbReference>
<dbReference type="Reactome" id="R-HSA-5626978">
    <property type="pathway name" value="TNFR1-mediated ceramide production"/>
</dbReference>
<dbReference type="Reactome" id="R-HSA-5669034">
    <property type="pathway name" value="TNFs bind their physiological receptors"/>
</dbReference>
<dbReference type="Reactome" id="R-HSA-6783783">
    <property type="pathway name" value="Interleukin-10 signaling"/>
</dbReference>
<dbReference type="Reactome" id="R-HSA-75893">
    <property type="pathway name" value="TNF signaling"/>
</dbReference>
<dbReference type="SignaLink" id="P19438"/>
<dbReference type="SIGNOR" id="P19438"/>
<dbReference type="BioGRID-ORCS" id="7132">
    <property type="hits" value="29 hits in 1171 CRISPR screens"/>
</dbReference>
<dbReference type="ChiTaRS" id="TNFRSF1A">
    <property type="organism name" value="human"/>
</dbReference>
<dbReference type="EvolutionaryTrace" id="P19438"/>
<dbReference type="GeneWiki" id="TNFRSF1A"/>
<dbReference type="GenomeRNAi" id="7132"/>
<dbReference type="Pharos" id="P19438">
    <property type="development level" value="Tchem"/>
</dbReference>
<dbReference type="PRO" id="PR:P19438"/>
<dbReference type="Proteomes" id="UP000005640">
    <property type="component" value="Chromosome 12"/>
</dbReference>
<dbReference type="RNAct" id="P19438">
    <property type="molecule type" value="protein"/>
</dbReference>
<dbReference type="Bgee" id="ENSG00000067182">
    <property type="expression patterns" value="Expressed in tendon of biceps brachii and 200 other cell types or tissues"/>
</dbReference>
<dbReference type="ExpressionAtlas" id="P19438">
    <property type="expression patterns" value="baseline and differential"/>
</dbReference>
<dbReference type="GO" id="GO:0009986">
    <property type="term" value="C:cell surface"/>
    <property type="evidence" value="ECO:0000314"/>
    <property type="project" value="UniProt"/>
</dbReference>
<dbReference type="GO" id="GO:0005576">
    <property type="term" value="C:extracellular region"/>
    <property type="evidence" value="ECO:0000304"/>
    <property type="project" value="Reactome"/>
</dbReference>
<dbReference type="GO" id="GO:0005615">
    <property type="term" value="C:extracellular space"/>
    <property type="evidence" value="ECO:0000314"/>
    <property type="project" value="BHF-UCL"/>
</dbReference>
<dbReference type="GO" id="GO:0000139">
    <property type="term" value="C:Golgi membrane"/>
    <property type="evidence" value="ECO:0000314"/>
    <property type="project" value="UniProtKB"/>
</dbReference>
<dbReference type="GO" id="GO:0016020">
    <property type="term" value="C:membrane"/>
    <property type="evidence" value="ECO:0000304"/>
    <property type="project" value="ARUK-UCL"/>
</dbReference>
<dbReference type="GO" id="GO:0045121">
    <property type="term" value="C:membrane raft"/>
    <property type="evidence" value="ECO:0000314"/>
    <property type="project" value="BHF-UCL"/>
</dbReference>
<dbReference type="GO" id="GO:0005886">
    <property type="term" value="C:plasma membrane"/>
    <property type="evidence" value="ECO:0000304"/>
    <property type="project" value="Reactome"/>
</dbReference>
<dbReference type="GO" id="GO:0043235">
    <property type="term" value="C:receptor complex"/>
    <property type="evidence" value="ECO:0000314"/>
    <property type="project" value="MGI"/>
</dbReference>
<dbReference type="GO" id="GO:0002947">
    <property type="term" value="C:tumor necrosis factor receptor superfamily complex"/>
    <property type="evidence" value="ECO:0000304"/>
    <property type="project" value="ARUK-UCL"/>
</dbReference>
<dbReference type="GO" id="GO:0038023">
    <property type="term" value="F:signaling receptor activity"/>
    <property type="evidence" value="ECO:0000250"/>
    <property type="project" value="UniProt"/>
</dbReference>
<dbReference type="GO" id="GO:0043120">
    <property type="term" value="F:tumor necrosis factor binding"/>
    <property type="evidence" value="ECO:0000353"/>
    <property type="project" value="ARUK-UCL"/>
</dbReference>
<dbReference type="GO" id="GO:0005031">
    <property type="term" value="F:tumor necrosis factor receptor activity"/>
    <property type="evidence" value="ECO:0000314"/>
    <property type="project" value="UniProt"/>
</dbReference>
<dbReference type="GO" id="GO:0003176">
    <property type="term" value="P:aortic valve development"/>
    <property type="evidence" value="ECO:0000250"/>
    <property type="project" value="BHF-UCL"/>
</dbReference>
<dbReference type="GO" id="GO:0007259">
    <property type="term" value="P:cell surface receptor signaling pathway via JAK-STAT"/>
    <property type="evidence" value="ECO:0000315"/>
    <property type="project" value="BHF-UCL"/>
</dbReference>
<dbReference type="GO" id="GO:0071260">
    <property type="term" value="P:cellular response to mechanical stimulus"/>
    <property type="evidence" value="ECO:0000270"/>
    <property type="project" value="UniProtKB"/>
</dbReference>
<dbReference type="GO" id="GO:0019221">
    <property type="term" value="P:cytokine-mediated signaling pathway"/>
    <property type="evidence" value="ECO:0000250"/>
    <property type="project" value="UniProtKB"/>
</dbReference>
<dbReference type="GO" id="GO:0042742">
    <property type="term" value="P:defense response to bacterium"/>
    <property type="evidence" value="ECO:0007669"/>
    <property type="project" value="Ensembl"/>
</dbReference>
<dbReference type="GO" id="GO:0008625">
    <property type="term" value="P:extrinsic apoptotic signaling pathway via death domain receptors"/>
    <property type="evidence" value="ECO:0000304"/>
    <property type="project" value="BHF-UCL"/>
</dbReference>
<dbReference type="GO" id="GO:0006954">
    <property type="term" value="P:inflammatory response"/>
    <property type="evidence" value="ECO:0000250"/>
    <property type="project" value="UniProtKB"/>
</dbReference>
<dbReference type="GO" id="GO:0008630">
    <property type="term" value="P:intrinsic apoptotic signaling pathway in response to DNA damage"/>
    <property type="evidence" value="ECO:0007669"/>
    <property type="project" value="Ensembl"/>
</dbReference>
<dbReference type="GO" id="GO:0010614">
    <property type="term" value="P:negative regulation of cardiac muscle hypertrophy"/>
    <property type="evidence" value="ECO:0007669"/>
    <property type="project" value="Ensembl"/>
</dbReference>
<dbReference type="GO" id="GO:0003332">
    <property type="term" value="P:negative regulation of extracellular matrix constituent secretion"/>
    <property type="evidence" value="ECO:0000250"/>
    <property type="project" value="BHF-UCL"/>
</dbReference>
<dbReference type="GO" id="GO:0050728">
    <property type="term" value="P:negative regulation of inflammatory response"/>
    <property type="evidence" value="ECO:0000315"/>
    <property type="project" value="BHF-UCL"/>
</dbReference>
<dbReference type="GO" id="GO:0034250">
    <property type="term" value="P:positive regulation of amide metabolic process"/>
    <property type="evidence" value="ECO:0007669"/>
    <property type="project" value="Ensembl"/>
</dbReference>
<dbReference type="GO" id="GO:1902339">
    <property type="term" value="P:positive regulation of apoptotic process involved in morphogenesis"/>
    <property type="evidence" value="ECO:0000250"/>
    <property type="project" value="BHF-UCL"/>
</dbReference>
<dbReference type="GO" id="GO:0043123">
    <property type="term" value="P:positive regulation of canonical NF-kappaB signal transduction"/>
    <property type="evidence" value="ECO:0000270"/>
    <property type="project" value="UniProtKB"/>
</dbReference>
<dbReference type="GO" id="GO:1900119">
    <property type="term" value="P:positive regulation of execution phase of apoptosis"/>
    <property type="evidence" value="ECO:0007669"/>
    <property type="project" value="Ensembl"/>
</dbReference>
<dbReference type="GO" id="GO:0050729">
    <property type="term" value="P:positive regulation of inflammatory response"/>
    <property type="evidence" value="ECO:0000250"/>
    <property type="project" value="UniProtKB"/>
</dbReference>
<dbReference type="GO" id="GO:0045834">
    <property type="term" value="P:positive regulation of lipid metabolic process"/>
    <property type="evidence" value="ECO:0007669"/>
    <property type="project" value="Ensembl"/>
</dbReference>
<dbReference type="GO" id="GO:0045944">
    <property type="term" value="P:positive regulation of transcription by RNA polymerase II"/>
    <property type="evidence" value="ECO:0000315"/>
    <property type="project" value="BHF-UCL"/>
</dbReference>
<dbReference type="GO" id="GO:0006693">
    <property type="term" value="P:prostaglandin metabolic process"/>
    <property type="evidence" value="ECO:0007669"/>
    <property type="project" value="InterPro"/>
</dbReference>
<dbReference type="GO" id="GO:0072659">
    <property type="term" value="P:protein localization to plasma membrane"/>
    <property type="evidence" value="ECO:0000315"/>
    <property type="project" value="UniProtKB"/>
</dbReference>
<dbReference type="GO" id="GO:0003177">
    <property type="term" value="P:pulmonary valve development"/>
    <property type="evidence" value="ECO:0000250"/>
    <property type="project" value="BHF-UCL"/>
</dbReference>
<dbReference type="GO" id="GO:1903140">
    <property type="term" value="P:regulation of establishment of endothelial barrier"/>
    <property type="evidence" value="ECO:0000315"/>
    <property type="project" value="UniProtKB"/>
</dbReference>
<dbReference type="GO" id="GO:1905038">
    <property type="term" value="P:regulation of membrane lipid metabolic process"/>
    <property type="evidence" value="ECO:0007669"/>
    <property type="project" value="Ensembl"/>
</dbReference>
<dbReference type="GO" id="GO:0010803">
    <property type="term" value="P:regulation of tumor necrosis factor-mediated signaling pathway"/>
    <property type="evidence" value="ECO:0007669"/>
    <property type="project" value="Ensembl"/>
</dbReference>
<dbReference type="GO" id="GO:0006366">
    <property type="term" value="P:transcription by RNA polymerase II"/>
    <property type="evidence" value="ECO:0007669"/>
    <property type="project" value="Ensembl"/>
</dbReference>
<dbReference type="GO" id="GO:0033209">
    <property type="term" value="P:tumor necrosis factor-mediated signaling pathway"/>
    <property type="evidence" value="ECO:0000315"/>
    <property type="project" value="UniProtKB"/>
</dbReference>
<dbReference type="CDD" id="cd08313">
    <property type="entry name" value="Death_TNFR1"/>
    <property type="match status" value="1"/>
</dbReference>
<dbReference type="CDD" id="cd10576">
    <property type="entry name" value="TNFRSF1A"/>
    <property type="match status" value="1"/>
</dbReference>
<dbReference type="FunFam" id="1.10.533.10:FF:000044">
    <property type="entry name" value="Tumor necrosis factor receptor superfamily member 1A"/>
    <property type="match status" value="1"/>
</dbReference>
<dbReference type="FunFam" id="2.10.50.10:FF:000020">
    <property type="entry name" value="Tumor necrosis factor receptor superfamily member 1A"/>
    <property type="match status" value="1"/>
</dbReference>
<dbReference type="FunFam" id="2.10.50.10:FF:000025">
    <property type="entry name" value="Tumor necrosis factor receptor superfamily member 1A"/>
    <property type="match status" value="1"/>
</dbReference>
<dbReference type="Gene3D" id="1.10.533.10">
    <property type="entry name" value="Death Domain, Fas"/>
    <property type="match status" value="1"/>
</dbReference>
<dbReference type="Gene3D" id="2.10.50.10">
    <property type="entry name" value="Tumor Necrosis Factor Receptor, subunit A, domain 2"/>
    <property type="match status" value="2"/>
</dbReference>
<dbReference type="InterPro" id="IPR011029">
    <property type="entry name" value="DEATH-like_dom_sf"/>
</dbReference>
<dbReference type="InterPro" id="IPR000488">
    <property type="entry name" value="Death_dom"/>
</dbReference>
<dbReference type="InterPro" id="IPR001368">
    <property type="entry name" value="TNFR/NGFR_Cys_rich_reg"/>
</dbReference>
<dbReference type="InterPro" id="IPR020419">
    <property type="entry name" value="TNFR_1A"/>
</dbReference>
<dbReference type="InterPro" id="IPR052493">
    <property type="entry name" value="TNFRSF1A"/>
</dbReference>
<dbReference type="InterPro" id="IPR033994">
    <property type="entry name" value="TNFRSF1A_death"/>
</dbReference>
<dbReference type="InterPro" id="IPR033993">
    <property type="entry name" value="TNFRSF1A_N"/>
</dbReference>
<dbReference type="PANTHER" id="PTHR46861">
    <property type="entry name" value="TUMOR NECROSIS FACTOR RECEPTOR SUPERFAMILY MEMBER 1A"/>
    <property type="match status" value="1"/>
</dbReference>
<dbReference type="PANTHER" id="PTHR46861:SF1">
    <property type="entry name" value="TUMOR NECROSIS FACTOR RECEPTOR SUPERFAMILY MEMBER 1A"/>
    <property type="match status" value="1"/>
</dbReference>
<dbReference type="Pfam" id="PF00531">
    <property type="entry name" value="Death"/>
    <property type="match status" value="1"/>
</dbReference>
<dbReference type="Pfam" id="PF00020">
    <property type="entry name" value="TNFR_c6"/>
    <property type="match status" value="2"/>
</dbReference>
<dbReference type="PRINTS" id="PR01918">
    <property type="entry name" value="TNFACTORR1A"/>
</dbReference>
<dbReference type="SMART" id="SM00005">
    <property type="entry name" value="DEATH"/>
    <property type="match status" value="1"/>
</dbReference>
<dbReference type="SMART" id="SM00208">
    <property type="entry name" value="TNFR"/>
    <property type="match status" value="4"/>
</dbReference>
<dbReference type="SUPFAM" id="SSF47986">
    <property type="entry name" value="DEATH domain"/>
    <property type="match status" value="1"/>
</dbReference>
<dbReference type="SUPFAM" id="SSF57586">
    <property type="entry name" value="TNF receptor-like"/>
    <property type="match status" value="3"/>
</dbReference>
<dbReference type="PROSITE" id="PS50017">
    <property type="entry name" value="DEATH_DOMAIN"/>
    <property type="match status" value="1"/>
</dbReference>
<dbReference type="PROSITE" id="PS00652">
    <property type="entry name" value="TNFR_NGFR_1"/>
    <property type="match status" value="3"/>
</dbReference>
<dbReference type="PROSITE" id="PS50050">
    <property type="entry name" value="TNFR_NGFR_2"/>
    <property type="match status" value="3"/>
</dbReference>
<sequence>MGLSTVPDLLLPLVLLELLVGIYPSGVIGLVPHLGDREKRDSVCPQGKYIHPQNNSICCTKCHKGTYLYNDCPGPGQDTDCRECESGSFTASENHLRHCLSCSKCRKEMGQVEISSCTVDRDTVCGCRKNQYRHYWSENLFQCFNCSLCLNGTVHLSCQEKQNTVCTCHAGFFLRENECVSCSNCKKSLECTKLCLPQIENVKGTEDSGTTVLLPLVIFFGLCLLSLLFIGLMYRYQRWKSKLYSIVCGKSTPEKEGELEGTTTKPLAPNPSFSPTPGFTPTLGFSPVPSSTFTSSSTYTPGDCPNFAAPRREVAPPYQGADPILATALASDPIPNPLQKWEDSAHKPQSLDTDDPATLYAVVENVPPLRWKEFVRRLGLSDHEIDRLELQNGRCLREAQYSMLATWRRRTPRREATLELLGRVLRDMDLLGCLEDIEEALCGPAALPPAPSLLR</sequence>
<keyword id="KW-0002">3D-structure</keyword>
<keyword id="KW-0025">Alternative splicing</keyword>
<keyword id="KW-1008">Amyloidosis</keyword>
<keyword id="KW-0053">Apoptosis</keyword>
<keyword id="KW-1003">Cell membrane</keyword>
<keyword id="KW-0165">Cleavage on pair of basic residues</keyword>
<keyword id="KW-0903">Direct protein sequencing</keyword>
<keyword id="KW-0225">Disease variant</keyword>
<keyword id="KW-1015">Disulfide bond</keyword>
<keyword id="KW-0325">Glycoprotein</keyword>
<keyword id="KW-0333">Golgi apparatus</keyword>
<keyword id="KW-0945">Host-virus interaction</keyword>
<keyword id="KW-0472">Membrane</keyword>
<keyword id="KW-1267">Proteomics identification</keyword>
<keyword id="KW-0675">Receptor</keyword>
<keyword id="KW-1185">Reference proteome</keyword>
<keyword id="KW-0677">Repeat</keyword>
<keyword id="KW-0964">Secreted</keyword>
<keyword id="KW-0732">Signal</keyword>
<keyword id="KW-0812">Transmembrane</keyword>
<keyword id="KW-1133">Transmembrane helix</keyword>
<proteinExistence type="evidence at protein level"/>
<gene>
    <name type="primary">TNFRSF1A</name>
    <name type="synonym">TNFAR</name>
    <name type="synonym">TNFR1</name>
</gene>
<accession>P19438</accession>
<accession>A8K4X3</accession>
<accession>B2RDE4</accession>
<accession>B3KPQ1</accession>
<accession>B4DQB7</accession>
<accession>B4E309</accession>
<accession>B5M0B5</accession>
<accession>D3DUR1</accession>
<accession>Q9UCA4</accession>
<organism>
    <name type="scientific">Homo sapiens</name>
    <name type="common">Human</name>
    <dbReference type="NCBI Taxonomy" id="9606"/>
    <lineage>
        <taxon>Eukaryota</taxon>
        <taxon>Metazoa</taxon>
        <taxon>Chordata</taxon>
        <taxon>Craniata</taxon>
        <taxon>Vertebrata</taxon>
        <taxon>Euteleostomi</taxon>
        <taxon>Mammalia</taxon>
        <taxon>Eutheria</taxon>
        <taxon>Euarchontoglires</taxon>
        <taxon>Primates</taxon>
        <taxon>Haplorrhini</taxon>
        <taxon>Catarrhini</taxon>
        <taxon>Hominidae</taxon>
        <taxon>Homo</taxon>
    </lineage>
</organism>
<name>TNR1A_HUMAN</name>